<gene>
    <name type="primary">KAT1</name>
    <name type="ordered locus">At1g04710</name>
    <name type="ORF">T1G11.4</name>
</gene>
<evidence type="ECO:0000250" key="1"/>
<evidence type="ECO:0000255" key="2"/>
<evidence type="ECO:0000255" key="3">
    <source>
        <dbReference type="PROSITE-ProRule" id="PRU10020"/>
    </source>
</evidence>
<evidence type="ECO:0000269" key="4">
    <source>
    </source>
</evidence>
<evidence type="ECO:0000269" key="5">
    <source>
    </source>
</evidence>
<evidence type="ECO:0000305" key="6"/>
<protein>
    <recommendedName>
        <fullName>3-ketoacyl-CoA thiolase 1, peroxisomal</fullName>
        <ecNumber>2.3.1.16</ecNumber>
    </recommendedName>
    <alternativeName>
        <fullName>Acetyl-CoA acyltransferase 1</fullName>
    </alternativeName>
    <alternativeName>
        <fullName>Beta-ketothiolase 1</fullName>
    </alternativeName>
    <alternativeName>
        <fullName>Peroxisomal 3-oxoacyl-CoA thiolase 1</fullName>
    </alternativeName>
</protein>
<dbReference type="EC" id="2.3.1.16"/>
<dbReference type="EMBL" id="AC002376">
    <property type="protein sequence ID" value="AAB80634.1"/>
    <property type="status" value="ALT_SEQ"/>
    <property type="molecule type" value="Genomic_DNA"/>
</dbReference>
<dbReference type="EMBL" id="CP002684">
    <property type="protein sequence ID" value="AEE27736.1"/>
    <property type="molecule type" value="Genomic_DNA"/>
</dbReference>
<dbReference type="EMBL" id="AY099741">
    <property type="protein sequence ID" value="AAM20592.1"/>
    <property type="molecule type" value="mRNA"/>
</dbReference>
<dbReference type="EMBL" id="BT003415">
    <property type="protein sequence ID" value="AAO30078.1"/>
    <property type="molecule type" value="mRNA"/>
</dbReference>
<dbReference type="EMBL" id="AY085052">
    <property type="protein sequence ID" value="AAM61609.1"/>
    <property type="molecule type" value="mRNA"/>
</dbReference>
<dbReference type="PIR" id="A86180">
    <property type="entry name" value="A86180"/>
</dbReference>
<dbReference type="SMR" id="Q8LF48"/>
<dbReference type="BioGRID" id="24669">
    <property type="interactions" value="1"/>
</dbReference>
<dbReference type="FunCoup" id="Q8LF48">
    <property type="interactions" value="1653"/>
</dbReference>
<dbReference type="IntAct" id="Q8LF48">
    <property type="interactions" value="1"/>
</dbReference>
<dbReference type="STRING" id="3702.Q8LF48"/>
<dbReference type="iPTMnet" id="Q8LF48"/>
<dbReference type="PaxDb" id="3702-AT1G04710.1"/>
<dbReference type="ProteomicsDB" id="234392"/>
<dbReference type="EnsemblPlants" id="AT1G04710.1">
    <property type="protein sequence ID" value="AT1G04710.1"/>
    <property type="gene ID" value="AT1G04710"/>
</dbReference>
<dbReference type="GeneID" id="839434"/>
<dbReference type="Gramene" id="AT1G04710.1">
    <property type="protein sequence ID" value="AT1G04710.1"/>
    <property type="gene ID" value="AT1G04710"/>
</dbReference>
<dbReference type="KEGG" id="ath:AT1G04710"/>
<dbReference type="Araport" id="AT1G04710"/>
<dbReference type="TAIR" id="AT1G04710">
    <property type="gene designation" value="PKT4"/>
</dbReference>
<dbReference type="eggNOG" id="KOG1389">
    <property type="taxonomic scope" value="Eukaryota"/>
</dbReference>
<dbReference type="HOGENOM" id="CLU_031026_1_1_1"/>
<dbReference type="InParanoid" id="Q8LF48"/>
<dbReference type="OMA" id="HAGEQSM"/>
<dbReference type="OrthoDB" id="5404651at2759"/>
<dbReference type="PhylomeDB" id="Q8LF48"/>
<dbReference type="UniPathway" id="UPA00199"/>
<dbReference type="CD-CODE" id="4299E36E">
    <property type="entry name" value="Nucleolus"/>
</dbReference>
<dbReference type="PRO" id="PR:Q8LF48"/>
<dbReference type="Proteomes" id="UP000006548">
    <property type="component" value="Chromosome 1"/>
</dbReference>
<dbReference type="ExpressionAtlas" id="Q8LF48">
    <property type="expression patterns" value="baseline and differential"/>
</dbReference>
<dbReference type="GO" id="GO:0005777">
    <property type="term" value="C:peroxisome"/>
    <property type="evidence" value="ECO:0007005"/>
    <property type="project" value="TAIR"/>
</dbReference>
<dbReference type="GO" id="GO:0000325">
    <property type="term" value="C:plant-type vacuole"/>
    <property type="evidence" value="ECO:0007005"/>
    <property type="project" value="TAIR"/>
</dbReference>
<dbReference type="GO" id="GO:0003988">
    <property type="term" value="F:acetyl-CoA C-acyltransferase activity"/>
    <property type="evidence" value="ECO:0007669"/>
    <property type="project" value="UniProtKB-EC"/>
</dbReference>
<dbReference type="GO" id="GO:0006633">
    <property type="term" value="P:fatty acid biosynthetic process"/>
    <property type="evidence" value="ECO:0007669"/>
    <property type="project" value="UniProtKB-KW"/>
</dbReference>
<dbReference type="GO" id="GO:0031408">
    <property type="term" value="P:oxylipin biosynthetic process"/>
    <property type="evidence" value="ECO:0007669"/>
    <property type="project" value="UniProtKB-KW"/>
</dbReference>
<dbReference type="CDD" id="cd00751">
    <property type="entry name" value="thiolase"/>
    <property type="match status" value="1"/>
</dbReference>
<dbReference type="FunFam" id="3.40.47.10:FF:000032">
    <property type="entry name" value="Peroxisomal 3-ketoacyl-CoA thiolase"/>
    <property type="match status" value="1"/>
</dbReference>
<dbReference type="Gene3D" id="3.40.47.10">
    <property type="match status" value="1"/>
</dbReference>
<dbReference type="InterPro" id="IPR002155">
    <property type="entry name" value="Thiolase"/>
</dbReference>
<dbReference type="InterPro" id="IPR016039">
    <property type="entry name" value="Thiolase-like"/>
</dbReference>
<dbReference type="InterPro" id="IPR050215">
    <property type="entry name" value="Thiolase-like_sf_Thiolase"/>
</dbReference>
<dbReference type="InterPro" id="IPR020615">
    <property type="entry name" value="Thiolase_acyl_enz_int_AS"/>
</dbReference>
<dbReference type="InterPro" id="IPR020610">
    <property type="entry name" value="Thiolase_AS"/>
</dbReference>
<dbReference type="InterPro" id="IPR020617">
    <property type="entry name" value="Thiolase_C"/>
</dbReference>
<dbReference type="InterPro" id="IPR020613">
    <property type="entry name" value="Thiolase_CS"/>
</dbReference>
<dbReference type="InterPro" id="IPR020616">
    <property type="entry name" value="Thiolase_N"/>
</dbReference>
<dbReference type="NCBIfam" id="TIGR01930">
    <property type="entry name" value="AcCoA-C-Actrans"/>
    <property type="match status" value="1"/>
</dbReference>
<dbReference type="PANTHER" id="PTHR43853:SF13">
    <property type="entry name" value="3-KETOACYL-COA THIOLASE 1, PEROXISOMAL"/>
    <property type="match status" value="1"/>
</dbReference>
<dbReference type="PANTHER" id="PTHR43853">
    <property type="entry name" value="3-KETOACYL-COA THIOLASE, PEROXISOMAL"/>
    <property type="match status" value="1"/>
</dbReference>
<dbReference type="Pfam" id="PF02803">
    <property type="entry name" value="Thiolase_C"/>
    <property type="match status" value="1"/>
</dbReference>
<dbReference type="Pfam" id="PF00108">
    <property type="entry name" value="Thiolase_N"/>
    <property type="match status" value="1"/>
</dbReference>
<dbReference type="PIRSF" id="PIRSF000429">
    <property type="entry name" value="Ac-CoA_Ac_transf"/>
    <property type="match status" value="1"/>
</dbReference>
<dbReference type="SUPFAM" id="SSF53901">
    <property type="entry name" value="Thiolase-like"/>
    <property type="match status" value="2"/>
</dbReference>
<dbReference type="PROSITE" id="PS00098">
    <property type="entry name" value="THIOLASE_1"/>
    <property type="match status" value="1"/>
</dbReference>
<dbReference type="PROSITE" id="PS00737">
    <property type="entry name" value="THIOLASE_2"/>
    <property type="match status" value="1"/>
</dbReference>
<dbReference type="PROSITE" id="PS00099">
    <property type="entry name" value="THIOLASE_3"/>
    <property type="match status" value="1"/>
</dbReference>
<reference key="1">
    <citation type="journal article" date="2000" name="Nature">
        <title>Sequence and analysis of chromosome 1 of the plant Arabidopsis thaliana.</title>
        <authorList>
            <person name="Theologis A."/>
            <person name="Ecker J.R."/>
            <person name="Palm C.J."/>
            <person name="Federspiel N.A."/>
            <person name="Kaul S."/>
            <person name="White O."/>
            <person name="Alonso J."/>
            <person name="Altafi H."/>
            <person name="Araujo R."/>
            <person name="Bowman C.L."/>
            <person name="Brooks S.Y."/>
            <person name="Buehler E."/>
            <person name="Chan A."/>
            <person name="Chao Q."/>
            <person name="Chen H."/>
            <person name="Cheuk R.F."/>
            <person name="Chin C.W."/>
            <person name="Chung M.K."/>
            <person name="Conn L."/>
            <person name="Conway A.B."/>
            <person name="Conway A.R."/>
            <person name="Creasy T.H."/>
            <person name="Dewar K."/>
            <person name="Dunn P."/>
            <person name="Etgu P."/>
            <person name="Feldblyum T.V."/>
            <person name="Feng J.-D."/>
            <person name="Fong B."/>
            <person name="Fujii C.Y."/>
            <person name="Gill J.E."/>
            <person name="Goldsmith A.D."/>
            <person name="Haas B."/>
            <person name="Hansen N.F."/>
            <person name="Hughes B."/>
            <person name="Huizar L."/>
            <person name="Hunter J.L."/>
            <person name="Jenkins J."/>
            <person name="Johnson-Hopson C."/>
            <person name="Khan S."/>
            <person name="Khaykin E."/>
            <person name="Kim C.J."/>
            <person name="Koo H.L."/>
            <person name="Kremenetskaia I."/>
            <person name="Kurtz D.B."/>
            <person name="Kwan A."/>
            <person name="Lam B."/>
            <person name="Langin-Hooper S."/>
            <person name="Lee A."/>
            <person name="Lee J.M."/>
            <person name="Lenz C.A."/>
            <person name="Li J.H."/>
            <person name="Li Y.-P."/>
            <person name="Lin X."/>
            <person name="Liu S.X."/>
            <person name="Liu Z.A."/>
            <person name="Luros J.S."/>
            <person name="Maiti R."/>
            <person name="Marziali A."/>
            <person name="Militscher J."/>
            <person name="Miranda M."/>
            <person name="Nguyen M."/>
            <person name="Nierman W.C."/>
            <person name="Osborne B.I."/>
            <person name="Pai G."/>
            <person name="Peterson J."/>
            <person name="Pham P.K."/>
            <person name="Rizzo M."/>
            <person name="Rooney T."/>
            <person name="Rowley D."/>
            <person name="Sakano H."/>
            <person name="Salzberg S.L."/>
            <person name="Schwartz J.R."/>
            <person name="Shinn P."/>
            <person name="Southwick A.M."/>
            <person name="Sun H."/>
            <person name="Tallon L.J."/>
            <person name="Tambunga G."/>
            <person name="Toriumi M.J."/>
            <person name="Town C.D."/>
            <person name="Utterback T."/>
            <person name="Van Aken S."/>
            <person name="Vaysberg M."/>
            <person name="Vysotskaia V.S."/>
            <person name="Walker M."/>
            <person name="Wu D."/>
            <person name="Yu G."/>
            <person name="Fraser C.M."/>
            <person name="Venter J.C."/>
            <person name="Davis R.W."/>
        </authorList>
    </citation>
    <scope>NUCLEOTIDE SEQUENCE [LARGE SCALE GENOMIC DNA]</scope>
    <source>
        <strain>cv. Columbia</strain>
    </source>
</reference>
<reference key="2">
    <citation type="journal article" date="2017" name="Plant J.">
        <title>Araport11: a complete reannotation of the Arabidopsis thaliana reference genome.</title>
        <authorList>
            <person name="Cheng C.Y."/>
            <person name="Krishnakumar V."/>
            <person name="Chan A.P."/>
            <person name="Thibaud-Nissen F."/>
            <person name="Schobel S."/>
            <person name="Town C.D."/>
        </authorList>
    </citation>
    <scope>GENOME REANNOTATION</scope>
    <source>
        <strain>cv. Columbia</strain>
    </source>
</reference>
<reference key="3">
    <citation type="journal article" date="2003" name="Science">
        <title>Empirical analysis of transcriptional activity in the Arabidopsis genome.</title>
        <authorList>
            <person name="Yamada K."/>
            <person name="Lim J."/>
            <person name="Dale J.M."/>
            <person name="Chen H."/>
            <person name="Shinn P."/>
            <person name="Palm C.J."/>
            <person name="Southwick A.M."/>
            <person name="Wu H.C."/>
            <person name="Kim C.J."/>
            <person name="Nguyen M."/>
            <person name="Pham P.K."/>
            <person name="Cheuk R.F."/>
            <person name="Karlin-Newmann G."/>
            <person name="Liu S.X."/>
            <person name="Lam B."/>
            <person name="Sakano H."/>
            <person name="Wu T."/>
            <person name="Yu G."/>
            <person name="Miranda M."/>
            <person name="Quach H.L."/>
            <person name="Tripp M."/>
            <person name="Chang C.H."/>
            <person name="Lee J.M."/>
            <person name="Toriumi M.J."/>
            <person name="Chan M.M."/>
            <person name="Tang C.C."/>
            <person name="Onodera C.S."/>
            <person name="Deng J.M."/>
            <person name="Akiyama K."/>
            <person name="Ansari Y."/>
            <person name="Arakawa T."/>
            <person name="Banh J."/>
            <person name="Banno F."/>
            <person name="Bowser L."/>
            <person name="Brooks S.Y."/>
            <person name="Carninci P."/>
            <person name="Chao Q."/>
            <person name="Choy N."/>
            <person name="Enju A."/>
            <person name="Goldsmith A.D."/>
            <person name="Gurjal M."/>
            <person name="Hansen N.F."/>
            <person name="Hayashizaki Y."/>
            <person name="Johnson-Hopson C."/>
            <person name="Hsuan V.W."/>
            <person name="Iida K."/>
            <person name="Karnes M."/>
            <person name="Khan S."/>
            <person name="Koesema E."/>
            <person name="Ishida J."/>
            <person name="Jiang P.X."/>
            <person name="Jones T."/>
            <person name="Kawai J."/>
            <person name="Kamiya A."/>
            <person name="Meyers C."/>
            <person name="Nakajima M."/>
            <person name="Narusaka M."/>
            <person name="Seki M."/>
            <person name="Sakurai T."/>
            <person name="Satou M."/>
            <person name="Tamse R."/>
            <person name="Vaysberg M."/>
            <person name="Wallender E.K."/>
            <person name="Wong C."/>
            <person name="Yamamura Y."/>
            <person name="Yuan S."/>
            <person name="Shinozaki K."/>
            <person name="Davis R.W."/>
            <person name="Theologis A."/>
            <person name="Ecker J.R."/>
        </authorList>
    </citation>
    <scope>NUCLEOTIDE SEQUENCE [LARGE SCALE MRNA]</scope>
    <source>
        <strain>cv. Columbia</strain>
    </source>
</reference>
<reference key="4">
    <citation type="submission" date="2002-03" db="EMBL/GenBank/DDBJ databases">
        <title>Full-length cDNA from Arabidopsis thaliana.</title>
        <authorList>
            <person name="Brover V.V."/>
            <person name="Troukhan M.E."/>
            <person name="Alexandrov N.A."/>
            <person name="Lu Y.-P."/>
            <person name="Flavell R.B."/>
            <person name="Feldmann K.A."/>
        </authorList>
    </citation>
    <scope>NUCLEOTIDE SEQUENCE [LARGE SCALE MRNA]</scope>
</reference>
<reference key="5">
    <citation type="journal article" date="2001" name="Plant J.">
        <title>Requirement for 3-ketoacyl-CoA thiolase-2 in peroxisome development, fatty acid beta-oxidation and breakdown of triacylglycerol in lipid bodies of Arabidopsis seedlings.</title>
        <authorList>
            <person name="Germain V."/>
            <person name="Rylott E.L."/>
            <person name="Larson T.R."/>
            <person name="Sherson S.M."/>
            <person name="Bechtold N."/>
            <person name="Carde J.-P."/>
            <person name="Bryce J.H."/>
            <person name="Graham I.A."/>
            <person name="Smith S.M."/>
        </authorList>
    </citation>
    <scope>TISSUE SPECIFICITY</scope>
</reference>
<reference key="6">
    <citation type="journal article" date="2004" name="Plant Physiol.">
        <title>Gene-specific involvement of beta-oxidation in wound-activated responses in Arabidopsis.</title>
        <authorList>
            <person name="Cruz-Castillo M."/>
            <person name="Martinez C."/>
            <person name="Buchala A."/>
            <person name="Metraux J.-P."/>
            <person name="Leon J."/>
        </authorList>
    </citation>
    <scope>TISSUE SPECIFICITY</scope>
</reference>
<reference key="7">
    <citation type="journal article" date="2007" name="Plant Cell">
        <title>Proteome analysis of Arabidopsis leaf peroxisomes reveals novel targeting peptides, metabolic pathways, and defense mechanisms.</title>
        <authorList>
            <person name="Reumann S."/>
            <person name="Babujee L."/>
            <person name="Ma C."/>
            <person name="Wienkoop S."/>
            <person name="Siemsen T."/>
            <person name="Antonicelli G.E."/>
            <person name="Rasche N."/>
            <person name="Lueder F."/>
            <person name="Weckwerth W."/>
            <person name="Jahn O."/>
        </authorList>
    </citation>
    <scope>IDENTIFICATION BY MASS SPECTROMETRY</scope>
</reference>
<proteinExistence type="evidence at protein level"/>
<sequence length="443" mass="46611">MEKATERQRILLRHLQPSSSSDASLSASACLSKDSAAYQYGDDVVIVAAQRTALCKAKRGSFKDTFPDELLASVLRALIEKTNVNPSEVGDIVVGTVLGPGSQRASECRMAAFYAGFPETVPIRTVNRQCSSGLQAVADVAAAIKAGFYDIGIGAGLESMTTNPRGWKGSVNPNVKKFEQAHNCLLPMGITSENVAHRFNVSREEQDQAAVDSHRKAASATASGKFKDEITPVKTKIVDPKTGDEKPITVSVDDGIRPNTTLSGLAKLKPVFKEDGTTTAGNSSQLSDGAGAVLLMRRNVAMQKGLPILGVFRTFSAVGVDPAIMGVGPAVAIPAAVKAAGLELNDVDLFEINEAFASQFVYCRNKLGLDAEKINVNGGAIAIGHPLGATGARCVATLLHEMKRRGKDCRFGVVSMCIGSGMGAAAVFERGGGVDELCDVRKV</sequence>
<name>THIK1_ARATH</name>
<organism>
    <name type="scientific">Arabidopsis thaliana</name>
    <name type="common">Mouse-ear cress</name>
    <dbReference type="NCBI Taxonomy" id="3702"/>
    <lineage>
        <taxon>Eukaryota</taxon>
        <taxon>Viridiplantae</taxon>
        <taxon>Streptophyta</taxon>
        <taxon>Embryophyta</taxon>
        <taxon>Tracheophyta</taxon>
        <taxon>Spermatophyta</taxon>
        <taxon>Magnoliopsida</taxon>
        <taxon>eudicotyledons</taxon>
        <taxon>Gunneridae</taxon>
        <taxon>Pentapetalae</taxon>
        <taxon>rosids</taxon>
        <taxon>malvids</taxon>
        <taxon>Brassicales</taxon>
        <taxon>Brassicaceae</taxon>
        <taxon>Camelineae</taxon>
        <taxon>Arabidopsis</taxon>
    </lineage>
</organism>
<feature type="transit peptide" description="Peroxisome" evidence="2">
    <location>
        <begin position="1"/>
        <end position="30"/>
    </location>
</feature>
<feature type="chain" id="PRO_0000034072" description="3-ketoacyl-CoA thiolase 1, peroxisomal">
    <location>
        <begin position="31"/>
        <end position="443"/>
    </location>
</feature>
<feature type="active site" description="Acyl-thioester intermediate" evidence="1">
    <location>
        <position position="130"/>
    </location>
</feature>
<feature type="active site" description="Proton acceptor" evidence="3">
    <location>
        <position position="385"/>
    </location>
</feature>
<feature type="active site" description="Proton acceptor" evidence="3">
    <location>
        <position position="417"/>
    </location>
</feature>
<feature type="sequence conflict" description="In Ref. 4; AAM61609." evidence="6" ref="4">
    <original>L</original>
    <variation>Q</variation>
    <location>
        <position position="369"/>
    </location>
</feature>
<feature type="sequence conflict" description="In Ref. 4; AAM61609." evidence="6" ref="4">
    <original>G</original>
    <variation>D</variation>
    <location>
        <position position="433"/>
    </location>
</feature>
<comment type="function">
    <text evidence="1">Involved in fatty-acid beta-oxidation prior to gluconeogenesis during germination and subsequent seedling growth. Implicated in jasmonic acid (JA) biosynthesis (By similarity).</text>
</comment>
<comment type="catalytic activity">
    <reaction>
        <text>an acyl-CoA + acetyl-CoA = a 3-oxoacyl-CoA + CoA</text>
        <dbReference type="Rhea" id="RHEA:21564"/>
        <dbReference type="ChEBI" id="CHEBI:57287"/>
        <dbReference type="ChEBI" id="CHEBI:57288"/>
        <dbReference type="ChEBI" id="CHEBI:58342"/>
        <dbReference type="ChEBI" id="CHEBI:90726"/>
        <dbReference type="EC" id="2.3.1.16"/>
    </reaction>
</comment>
<comment type="pathway">
    <text>Lipid metabolism; fatty acid metabolism.</text>
</comment>
<comment type="subunit">
    <text evidence="1">Homodimer.</text>
</comment>
<comment type="interaction">
    <interactant intactId="EBI-25521360">
        <id>Q8LF48</id>
    </interactant>
    <interactant intactId="EBI-9536794">
        <id>Q9XF57</id>
        <label>PEX7</label>
    </interactant>
    <organismsDiffer>false</organismsDiffer>
    <experiments>3</experiments>
</comment>
<comment type="subcellular location">
    <subcellularLocation>
        <location evidence="1">Peroxisome</location>
    </subcellularLocation>
</comment>
<comment type="tissue specificity">
    <text evidence="4 5">Low levels in seedlings and leaves.</text>
</comment>
<comment type="similarity">
    <text evidence="6">Belongs to the thiolase-like superfamily. Thiolase family.</text>
</comment>
<comment type="sequence caution" evidence="6">
    <conflict type="erroneous gene model prediction">
        <sequence resource="EMBL-CDS" id="AAB80634"/>
    </conflict>
</comment>
<keyword id="KW-0012">Acyltransferase</keyword>
<keyword id="KW-0275">Fatty acid biosynthesis</keyword>
<keyword id="KW-0276">Fatty acid metabolism</keyword>
<keyword id="KW-0444">Lipid biosynthesis</keyword>
<keyword id="KW-0443">Lipid metabolism</keyword>
<keyword id="KW-0925">Oxylipin biosynthesis</keyword>
<keyword id="KW-0576">Peroxisome</keyword>
<keyword id="KW-1185">Reference proteome</keyword>
<keyword id="KW-0808">Transferase</keyword>
<keyword id="KW-0809">Transit peptide</keyword>
<accession>Q8LF48</accession>
<accession>O23014</accession>
<accession>Q8LPI4</accession>